<feature type="chain" id="PRO_0000342498" description="GDP-mannose pyrophosphatase">
    <location>
        <begin position="1"/>
        <end position="191"/>
    </location>
</feature>
<feature type="domain" description="Nudix hydrolase" evidence="2">
    <location>
        <begin position="43"/>
        <end position="180"/>
    </location>
</feature>
<feature type="short sequence motif" description="Nudix box">
    <location>
        <begin position="86"/>
        <end position="106"/>
    </location>
</feature>
<feature type="binding site" description="in other chain" evidence="1">
    <location>
        <position position="17"/>
    </location>
    <ligand>
        <name>GDP-alpha-D-mannose</name>
        <dbReference type="ChEBI" id="CHEBI:57527"/>
        <note>ligand shared between dimeric partners</note>
    </ligand>
</feature>
<feature type="binding site" evidence="1">
    <location>
        <begin position="38"/>
        <end position="40"/>
    </location>
    <ligand>
        <name>GDP-alpha-D-mannose</name>
        <dbReference type="ChEBI" id="CHEBI:57527"/>
        <note>ligand shared between dimeric partners</note>
    </ligand>
</feature>
<feature type="binding site" description="in other chain" evidence="1">
    <location>
        <position position="67"/>
    </location>
    <ligand>
        <name>GDP-alpha-D-mannose</name>
        <dbReference type="ChEBI" id="CHEBI:57527"/>
        <note>ligand shared between dimeric partners</note>
    </ligand>
</feature>
<feature type="binding site" description="in other chain" evidence="1">
    <location>
        <begin position="85"/>
        <end position="87"/>
    </location>
    <ligand>
        <name>GDP-alpha-D-mannose</name>
        <dbReference type="ChEBI" id="CHEBI:57527"/>
        <note>ligand shared between dimeric partners</note>
    </ligand>
</feature>
<feature type="binding site" evidence="1">
    <location>
        <position position="85"/>
    </location>
    <ligand>
        <name>Mg(2+)</name>
        <dbReference type="ChEBI" id="CHEBI:18420"/>
        <label>1</label>
    </ligand>
</feature>
<feature type="binding site" evidence="1">
    <location>
        <position position="100"/>
    </location>
    <ligand>
        <name>Mg(2+)</name>
        <dbReference type="ChEBI" id="CHEBI:18420"/>
        <label>2</label>
    </ligand>
</feature>
<feature type="binding site" description="in other chain" evidence="1">
    <location>
        <position position="104"/>
    </location>
    <ligand>
        <name>GDP-alpha-D-mannose</name>
        <dbReference type="ChEBI" id="CHEBI:57527"/>
        <note>ligand shared between dimeric partners</note>
    </ligand>
</feature>
<feature type="binding site" evidence="1">
    <location>
        <position position="104"/>
    </location>
    <ligand>
        <name>Mg(2+)</name>
        <dbReference type="ChEBI" id="CHEBI:18420"/>
        <label>1</label>
    </ligand>
</feature>
<feature type="binding site" evidence="1">
    <location>
        <position position="104"/>
    </location>
    <ligand>
        <name>Mg(2+)</name>
        <dbReference type="ChEBI" id="CHEBI:18420"/>
        <label>2</label>
    </ligand>
</feature>
<feature type="binding site" description="in other chain" evidence="1">
    <location>
        <position position="127"/>
    </location>
    <ligand>
        <name>GDP-alpha-D-mannose</name>
        <dbReference type="ChEBI" id="CHEBI:57527"/>
        <note>ligand shared between dimeric partners</note>
    </ligand>
</feature>
<feature type="binding site" description="in other chain" evidence="1">
    <location>
        <begin position="150"/>
        <end position="151"/>
    </location>
    <ligand>
        <name>GDP-alpha-D-mannose</name>
        <dbReference type="ChEBI" id="CHEBI:57527"/>
        <note>ligand shared between dimeric partners</note>
    </ligand>
</feature>
<feature type="binding site" evidence="1">
    <location>
        <position position="151"/>
    </location>
    <ligand>
        <name>Mg(2+)</name>
        <dbReference type="ChEBI" id="CHEBI:18420"/>
        <label>2</label>
    </ligand>
</feature>
<feature type="binding site" description="in other chain" evidence="1">
    <location>
        <position position="176"/>
    </location>
    <ligand>
        <name>GDP-alpha-D-mannose</name>
        <dbReference type="ChEBI" id="CHEBI:57527"/>
        <note>ligand shared between dimeric partners</note>
    </ligand>
</feature>
<gene>
    <name type="primary">nudK</name>
    <name type="ordered locus">STM2477</name>
</gene>
<keyword id="KW-0378">Hydrolase</keyword>
<keyword id="KW-0460">Magnesium</keyword>
<keyword id="KW-0479">Metal-binding</keyword>
<keyword id="KW-1185">Reference proteome</keyword>
<organism>
    <name type="scientific">Salmonella typhimurium (strain LT2 / SGSC1412 / ATCC 700720)</name>
    <dbReference type="NCBI Taxonomy" id="99287"/>
    <lineage>
        <taxon>Bacteria</taxon>
        <taxon>Pseudomonadati</taxon>
        <taxon>Pseudomonadota</taxon>
        <taxon>Gammaproteobacteria</taxon>
        <taxon>Enterobacterales</taxon>
        <taxon>Enterobacteriaceae</taxon>
        <taxon>Salmonella</taxon>
    </lineage>
</organism>
<dbReference type="EC" id="3.6.1.-" evidence="1"/>
<dbReference type="EMBL" id="AE006468">
    <property type="protein sequence ID" value="AAL21371.1"/>
    <property type="molecule type" value="Genomic_DNA"/>
</dbReference>
<dbReference type="RefSeq" id="WP_000084037.1">
    <property type="nucleotide sequence ID" value="NC_003197.2"/>
</dbReference>
<dbReference type="SMR" id="Q7CQ25"/>
<dbReference type="STRING" id="99287.STM2477"/>
<dbReference type="PaxDb" id="99287-STM2477"/>
<dbReference type="KEGG" id="stm:STM2477"/>
<dbReference type="PATRIC" id="fig|99287.12.peg.2615"/>
<dbReference type="HOGENOM" id="CLU_062658_6_0_6"/>
<dbReference type="OMA" id="EQCIRNE"/>
<dbReference type="PhylomeDB" id="Q7CQ25"/>
<dbReference type="BioCyc" id="SENT99287:STM2477-MONOMER"/>
<dbReference type="Proteomes" id="UP000001014">
    <property type="component" value="Chromosome"/>
</dbReference>
<dbReference type="GO" id="GO:0005829">
    <property type="term" value="C:cytosol"/>
    <property type="evidence" value="ECO:0000318"/>
    <property type="project" value="GO_Central"/>
</dbReference>
<dbReference type="GO" id="GO:0016818">
    <property type="term" value="F:hydrolase activity, acting on acid anhydrides, in phosphorus-containing anhydrides"/>
    <property type="evidence" value="ECO:0007669"/>
    <property type="project" value="InterPro"/>
</dbReference>
<dbReference type="GO" id="GO:0046872">
    <property type="term" value="F:metal ion binding"/>
    <property type="evidence" value="ECO:0007669"/>
    <property type="project" value="UniProtKB-KW"/>
</dbReference>
<dbReference type="GO" id="GO:0006753">
    <property type="term" value="P:nucleoside phosphate metabolic process"/>
    <property type="evidence" value="ECO:0000318"/>
    <property type="project" value="GO_Central"/>
</dbReference>
<dbReference type="GO" id="GO:0019693">
    <property type="term" value="P:ribose phosphate metabolic process"/>
    <property type="evidence" value="ECO:0000318"/>
    <property type="project" value="GO_Central"/>
</dbReference>
<dbReference type="CDD" id="cd24157">
    <property type="entry name" value="NUDIX_GDPMK"/>
    <property type="match status" value="1"/>
</dbReference>
<dbReference type="FunFam" id="3.90.79.10:FF:000010">
    <property type="entry name" value="GDP-mannose pyrophosphatase NudK"/>
    <property type="match status" value="1"/>
</dbReference>
<dbReference type="Gene3D" id="3.90.79.10">
    <property type="entry name" value="Nucleoside Triphosphate Pyrophosphohydrolase"/>
    <property type="match status" value="1"/>
</dbReference>
<dbReference type="InterPro" id="IPR004385">
    <property type="entry name" value="NDP_pyrophosphatase"/>
</dbReference>
<dbReference type="InterPro" id="IPR015797">
    <property type="entry name" value="NUDIX_hydrolase-like_dom_sf"/>
</dbReference>
<dbReference type="InterPro" id="IPR000086">
    <property type="entry name" value="NUDIX_hydrolase_dom"/>
</dbReference>
<dbReference type="NCBIfam" id="TIGR00052">
    <property type="entry name" value="nudix-type nucleoside diphosphatase, YffH/AdpP family"/>
    <property type="match status" value="1"/>
</dbReference>
<dbReference type="NCBIfam" id="NF011585">
    <property type="entry name" value="PRK15009.1"/>
    <property type="match status" value="1"/>
</dbReference>
<dbReference type="PANTHER" id="PTHR11839:SF18">
    <property type="entry name" value="NUDIX HYDROLASE DOMAIN-CONTAINING PROTEIN"/>
    <property type="match status" value="1"/>
</dbReference>
<dbReference type="PANTHER" id="PTHR11839">
    <property type="entry name" value="UDP/ADP-SUGAR PYROPHOSPHATASE"/>
    <property type="match status" value="1"/>
</dbReference>
<dbReference type="Pfam" id="PF00293">
    <property type="entry name" value="NUDIX"/>
    <property type="match status" value="1"/>
</dbReference>
<dbReference type="SUPFAM" id="SSF55811">
    <property type="entry name" value="Nudix"/>
    <property type="match status" value="1"/>
</dbReference>
<dbReference type="PROSITE" id="PS51462">
    <property type="entry name" value="NUDIX"/>
    <property type="match status" value="1"/>
</dbReference>
<comment type="function">
    <text evidence="1">Nucleoside diphosphate sugar hydrolase that hydrolyzes GDP-mannose as its preferred substrate, yielding GMP and mannose-1-phosphate.</text>
</comment>
<comment type="catalytic activity">
    <reaction evidence="1">
        <text>GDP-alpha-D-mannose + H2O = alpha-D-mannose 1-phosphate + GMP + 2 H(+)</text>
        <dbReference type="Rhea" id="RHEA:27978"/>
        <dbReference type="ChEBI" id="CHEBI:15377"/>
        <dbReference type="ChEBI" id="CHEBI:15378"/>
        <dbReference type="ChEBI" id="CHEBI:57527"/>
        <dbReference type="ChEBI" id="CHEBI:58115"/>
        <dbReference type="ChEBI" id="CHEBI:58409"/>
    </reaction>
</comment>
<comment type="cofactor">
    <cofactor evidence="1">
        <name>Mg(2+)</name>
        <dbReference type="ChEBI" id="CHEBI:18420"/>
    </cofactor>
</comment>
<comment type="subunit">
    <text evidence="1">Homodimer.</text>
</comment>
<comment type="domain">
    <text evidence="1">In the dimer, the N-terminal domains are swapped between the two monomers, such that residues of both chains contribute to the active site.</text>
</comment>
<comment type="similarity">
    <text evidence="3">Belongs to the Nudix hydrolase family. NudK subfamily.</text>
</comment>
<name>NUDK_SALTY</name>
<accession>Q7CQ25</accession>
<protein>
    <recommendedName>
        <fullName>GDP-mannose pyrophosphatase</fullName>
        <ecNumber evidence="1">3.6.1.-</ecNumber>
    </recommendedName>
    <alternativeName>
        <fullName>GDP-mannose hydrolase</fullName>
    </alternativeName>
    <alternativeName>
        <fullName>GDPMK</fullName>
    </alternativeName>
</protein>
<proteinExistence type="inferred from homology"/>
<sequence length="191" mass="21810">MSQTITLIKDKILSDNYFTLRNITYDLTRRNGEVIRHKREVYDRGNGATILLYNSTKKTVVLVRQFRVATWVNGNQDGMLIETCAGLLDNDEPEVCIRKEAIEETGYDVGEVRKIFELYMSPGGVTELIHFFIAEYHDSERASIGGGVEDEEIEVLELPFSRALEMVRSGEIRDGKTVLLLNYLQTSHLMD</sequence>
<reference key="1">
    <citation type="journal article" date="2001" name="Nature">
        <title>Complete genome sequence of Salmonella enterica serovar Typhimurium LT2.</title>
        <authorList>
            <person name="McClelland M."/>
            <person name="Sanderson K.E."/>
            <person name="Spieth J."/>
            <person name="Clifton S.W."/>
            <person name="Latreille P."/>
            <person name="Courtney L."/>
            <person name="Porwollik S."/>
            <person name="Ali J."/>
            <person name="Dante M."/>
            <person name="Du F."/>
            <person name="Hou S."/>
            <person name="Layman D."/>
            <person name="Leonard S."/>
            <person name="Nguyen C."/>
            <person name="Scott K."/>
            <person name="Holmes A."/>
            <person name="Grewal N."/>
            <person name="Mulvaney E."/>
            <person name="Ryan E."/>
            <person name="Sun H."/>
            <person name="Florea L."/>
            <person name="Miller W."/>
            <person name="Stoneking T."/>
            <person name="Nhan M."/>
            <person name="Waterston R."/>
            <person name="Wilson R.K."/>
        </authorList>
    </citation>
    <scope>NUCLEOTIDE SEQUENCE [LARGE SCALE GENOMIC DNA]</scope>
    <source>
        <strain>LT2 / SGSC1412 / ATCC 700720</strain>
    </source>
</reference>
<evidence type="ECO:0000250" key="1">
    <source>
        <dbReference type="UniProtKB" id="P37128"/>
    </source>
</evidence>
<evidence type="ECO:0000255" key="2">
    <source>
        <dbReference type="PROSITE-ProRule" id="PRU00794"/>
    </source>
</evidence>
<evidence type="ECO:0000305" key="3"/>